<keyword id="KW-0997">Cell inner membrane</keyword>
<keyword id="KW-1003">Cell membrane</keyword>
<keyword id="KW-0378">Hydrolase</keyword>
<keyword id="KW-0444">Lipid biosynthesis</keyword>
<keyword id="KW-0443">Lipid metabolism</keyword>
<keyword id="KW-0472">Membrane</keyword>
<keyword id="KW-0594">Phospholipid biosynthesis</keyword>
<keyword id="KW-1208">Phospholipid metabolism</keyword>
<keyword id="KW-0812">Transmembrane</keyword>
<keyword id="KW-1133">Transmembrane helix</keyword>
<accession>B5RFA7</accession>
<gene>
    <name evidence="1" type="primary">cdh</name>
    <name type="ordered locus">SG3357</name>
</gene>
<reference key="1">
    <citation type="journal article" date="2008" name="Genome Res.">
        <title>Comparative genome analysis of Salmonella enteritidis PT4 and Salmonella gallinarum 287/91 provides insights into evolutionary and host adaptation pathways.</title>
        <authorList>
            <person name="Thomson N.R."/>
            <person name="Clayton D.J."/>
            <person name="Windhorst D."/>
            <person name="Vernikos G."/>
            <person name="Davidson S."/>
            <person name="Churcher C."/>
            <person name="Quail M.A."/>
            <person name="Stevens M."/>
            <person name="Jones M.A."/>
            <person name="Watson M."/>
            <person name="Barron A."/>
            <person name="Layton A."/>
            <person name="Pickard D."/>
            <person name="Kingsley R.A."/>
            <person name="Bignell A."/>
            <person name="Clark L."/>
            <person name="Harris B."/>
            <person name="Ormond D."/>
            <person name="Abdellah Z."/>
            <person name="Brooks K."/>
            <person name="Cherevach I."/>
            <person name="Chillingworth T."/>
            <person name="Woodward J."/>
            <person name="Norberczak H."/>
            <person name="Lord A."/>
            <person name="Arrowsmith C."/>
            <person name="Jagels K."/>
            <person name="Moule S."/>
            <person name="Mungall K."/>
            <person name="Saunders M."/>
            <person name="Whitehead S."/>
            <person name="Chabalgoity J.A."/>
            <person name="Maskell D."/>
            <person name="Humphreys T."/>
            <person name="Roberts M."/>
            <person name="Barrow P.A."/>
            <person name="Dougan G."/>
            <person name="Parkhill J."/>
        </authorList>
    </citation>
    <scope>NUCLEOTIDE SEQUENCE [LARGE SCALE GENOMIC DNA]</scope>
    <source>
        <strain>287/91 / NCTC 13346</strain>
    </source>
</reference>
<feature type="chain" id="PRO_1000115945" description="CDP-diacylglycerol pyrophosphatase">
    <location>
        <begin position="1"/>
        <end position="251"/>
    </location>
</feature>
<feature type="transmembrane region" description="Helical" evidence="1">
    <location>
        <begin position="5"/>
        <end position="25"/>
    </location>
</feature>
<proteinExistence type="inferred from homology"/>
<evidence type="ECO:0000255" key="1">
    <source>
        <dbReference type="HAMAP-Rule" id="MF_00319"/>
    </source>
</evidence>
<name>CDH_SALG2</name>
<dbReference type="EC" id="3.6.1.26" evidence="1"/>
<dbReference type="EMBL" id="AM933173">
    <property type="protein sequence ID" value="CAR39150.1"/>
    <property type="molecule type" value="Genomic_DNA"/>
</dbReference>
<dbReference type="RefSeq" id="WP_000750762.1">
    <property type="nucleotide sequence ID" value="NC_011274.1"/>
</dbReference>
<dbReference type="SMR" id="B5RFA7"/>
<dbReference type="KEGG" id="seg:SG3357"/>
<dbReference type="HOGENOM" id="CLU_077117_0_1_6"/>
<dbReference type="UniPathway" id="UPA00609">
    <property type="reaction ID" value="UER00664"/>
</dbReference>
<dbReference type="Proteomes" id="UP000008321">
    <property type="component" value="Chromosome"/>
</dbReference>
<dbReference type="GO" id="GO:0005886">
    <property type="term" value="C:plasma membrane"/>
    <property type="evidence" value="ECO:0007669"/>
    <property type="project" value="UniProtKB-SubCell"/>
</dbReference>
<dbReference type="GO" id="GO:0008715">
    <property type="term" value="F:CDP-diacylglycerol diphosphatase activity"/>
    <property type="evidence" value="ECO:0007669"/>
    <property type="project" value="UniProtKB-UniRule"/>
</dbReference>
<dbReference type="GO" id="GO:0046342">
    <property type="term" value="P:CDP-diacylglycerol catabolic process"/>
    <property type="evidence" value="ECO:0007669"/>
    <property type="project" value="UniProtKB-UniRule"/>
</dbReference>
<dbReference type="GO" id="GO:0008654">
    <property type="term" value="P:phospholipid biosynthetic process"/>
    <property type="evidence" value="ECO:0007669"/>
    <property type="project" value="UniProtKB-KW"/>
</dbReference>
<dbReference type="Gene3D" id="3.30.428.30">
    <property type="entry name" value="HIT family - CDH-like"/>
    <property type="match status" value="1"/>
</dbReference>
<dbReference type="HAMAP" id="MF_00319">
    <property type="entry name" value="Cdh"/>
    <property type="match status" value="1"/>
</dbReference>
<dbReference type="InterPro" id="IPR003763">
    <property type="entry name" value="CDP-diacylglyc_Pase"/>
</dbReference>
<dbReference type="InterPro" id="IPR015993">
    <property type="entry name" value="CDP-diacylglyc_Pase_proteobac"/>
</dbReference>
<dbReference type="InterPro" id="IPR036265">
    <property type="entry name" value="HIT-like_sf"/>
</dbReference>
<dbReference type="NCBIfam" id="TIGR00672">
    <property type="entry name" value="cdh"/>
    <property type="match status" value="1"/>
</dbReference>
<dbReference type="NCBIfam" id="NF003986">
    <property type="entry name" value="PRK05471.1-5"/>
    <property type="match status" value="1"/>
</dbReference>
<dbReference type="NCBIfam" id="NF003987">
    <property type="entry name" value="PRK05471.1-6"/>
    <property type="match status" value="1"/>
</dbReference>
<dbReference type="Pfam" id="PF02611">
    <property type="entry name" value="CDH"/>
    <property type="match status" value="1"/>
</dbReference>
<dbReference type="PIRSF" id="PIRSF001273">
    <property type="entry name" value="CDH"/>
    <property type="match status" value="1"/>
</dbReference>
<dbReference type="SUPFAM" id="SSF54197">
    <property type="entry name" value="HIT-like"/>
    <property type="match status" value="1"/>
</dbReference>
<organism>
    <name type="scientific">Salmonella gallinarum (strain 287/91 / NCTC 13346)</name>
    <dbReference type="NCBI Taxonomy" id="550538"/>
    <lineage>
        <taxon>Bacteria</taxon>
        <taxon>Pseudomonadati</taxon>
        <taxon>Pseudomonadota</taxon>
        <taxon>Gammaproteobacteria</taxon>
        <taxon>Enterobacterales</taxon>
        <taxon>Enterobacteriaceae</taxon>
        <taxon>Salmonella</taxon>
    </lineage>
</organism>
<protein>
    <recommendedName>
        <fullName evidence="1">CDP-diacylglycerol pyrophosphatase</fullName>
        <ecNumber evidence="1">3.6.1.26</ecNumber>
    </recommendedName>
    <alternativeName>
        <fullName evidence="1">CDP-diacylglycerol phosphatidylhydrolase</fullName>
    </alternativeName>
    <alternativeName>
        <fullName evidence="1">CDP-diglyceride hydrolase</fullName>
    </alternativeName>
</protein>
<comment type="catalytic activity">
    <reaction evidence="1">
        <text>a CDP-1,2-diacyl-sn-glycerol + H2O = a 1,2-diacyl-sn-glycero-3-phosphate + CMP + 2 H(+)</text>
        <dbReference type="Rhea" id="RHEA:15221"/>
        <dbReference type="ChEBI" id="CHEBI:15377"/>
        <dbReference type="ChEBI" id="CHEBI:15378"/>
        <dbReference type="ChEBI" id="CHEBI:58332"/>
        <dbReference type="ChEBI" id="CHEBI:58608"/>
        <dbReference type="ChEBI" id="CHEBI:60377"/>
        <dbReference type="EC" id="3.6.1.26"/>
    </reaction>
</comment>
<comment type="pathway">
    <text evidence="1">Phospholipid metabolism; CDP-diacylglycerol degradation; phosphatidate from CDP-diacylglycerol: step 1/1.</text>
</comment>
<comment type="subcellular location">
    <subcellularLocation>
        <location evidence="1">Cell inner membrane</location>
        <topology evidence="1">Single-pass membrane protein</topology>
    </subcellularLocation>
</comment>
<comment type="similarity">
    <text evidence="1">Belongs to the Cdh family.</text>
</comment>
<sequence length="251" mass="28334">MKKTGYFLLAVIVIVAAAGVGYWKFSGNPDALREIVLEQCLPDQLQHQNPAPCAEVKPRAGYVVFKDRHGPLQYLLMPTYRINGTESPLLLEPATPNFFWLAWQARGYMSKKYGHDIPDSAVSLAINSRLGRSQDHLHIHISCIRPDVREQLDNDLTRISTRWLPLPGGLMGHEYLARRVTESELAQRSPFMMLAEEVPEARDHMGRYALAVVRQSDDSFVLLATERNLLTLNRASAEEIQDHSCAILSSR</sequence>